<reference key="1">
    <citation type="journal article" date="2003" name="Nucleic Acids Res.">
        <title>What's in the genome of a filamentous fungus? Analysis of the Neurospora genome sequence.</title>
        <authorList>
            <person name="Mannhaupt G."/>
            <person name="Montrone C."/>
            <person name="Haase D."/>
            <person name="Mewes H.-W."/>
            <person name="Aign V."/>
            <person name="Hoheisel J.D."/>
            <person name="Fartmann B."/>
            <person name="Nyakatura G."/>
            <person name="Kempken F."/>
            <person name="Maier J."/>
            <person name="Schulte U."/>
        </authorList>
    </citation>
    <scope>NUCLEOTIDE SEQUENCE [LARGE SCALE GENOMIC DNA]</scope>
    <source>
        <strain>ATCC 24698 / 74-OR23-1A / CBS 708.71 / DSM 1257 / FGSC 987</strain>
    </source>
</reference>
<reference key="2">
    <citation type="journal article" date="2003" name="Nature">
        <title>The genome sequence of the filamentous fungus Neurospora crassa.</title>
        <authorList>
            <person name="Galagan J.E."/>
            <person name="Calvo S.E."/>
            <person name="Borkovich K.A."/>
            <person name="Selker E.U."/>
            <person name="Read N.D."/>
            <person name="Jaffe D.B."/>
            <person name="FitzHugh W."/>
            <person name="Ma L.-J."/>
            <person name="Smirnov S."/>
            <person name="Purcell S."/>
            <person name="Rehman B."/>
            <person name="Elkins T."/>
            <person name="Engels R."/>
            <person name="Wang S."/>
            <person name="Nielsen C.B."/>
            <person name="Butler J."/>
            <person name="Endrizzi M."/>
            <person name="Qui D."/>
            <person name="Ianakiev P."/>
            <person name="Bell-Pedersen D."/>
            <person name="Nelson M.A."/>
            <person name="Werner-Washburne M."/>
            <person name="Selitrennikoff C.P."/>
            <person name="Kinsey J.A."/>
            <person name="Braun E.L."/>
            <person name="Zelter A."/>
            <person name="Schulte U."/>
            <person name="Kothe G.O."/>
            <person name="Jedd G."/>
            <person name="Mewes H.-W."/>
            <person name="Staben C."/>
            <person name="Marcotte E."/>
            <person name="Greenberg D."/>
            <person name="Roy A."/>
            <person name="Foley K."/>
            <person name="Naylor J."/>
            <person name="Stange-Thomann N."/>
            <person name="Barrett R."/>
            <person name="Gnerre S."/>
            <person name="Kamal M."/>
            <person name="Kamvysselis M."/>
            <person name="Mauceli E.W."/>
            <person name="Bielke C."/>
            <person name="Rudd S."/>
            <person name="Frishman D."/>
            <person name="Krystofova S."/>
            <person name="Rasmussen C."/>
            <person name="Metzenberg R.L."/>
            <person name="Perkins D.D."/>
            <person name="Kroken S."/>
            <person name="Cogoni C."/>
            <person name="Macino G."/>
            <person name="Catcheside D.E.A."/>
            <person name="Li W."/>
            <person name="Pratt R.J."/>
            <person name="Osmani S.A."/>
            <person name="DeSouza C.P.C."/>
            <person name="Glass N.L."/>
            <person name="Orbach M.J."/>
            <person name="Berglund J.A."/>
            <person name="Voelker R."/>
            <person name="Yarden O."/>
            <person name="Plamann M."/>
            <person name="Seiler S."/>
            <person name="Dunlap J.C."/>
            <person name="Radford A."/>
            <person name="Aramayo R."/>
            <person name="Natvig D.O."/>
            <person name="Alex L.A."/>
            <person name="Mannhaupt G."/>
            <person name="Ebbole D.J."/>
            <person name="Freitag M."/>
            <person name="Paulsen I."/>
            <person name="Sachs M.S."/>
            <person name="Lander E.S."/>
            <person name="Nusbaum C."/>
            <person name="Birren B.W."/>
        </authorList>
    </citation>
    <scope>NUCLEOTIDE SEQUENCE [LARGE SCALE GENOMIC DNA]</scope>
    <source>
        <strain>ATCC 24698 / 74-OR23-1A / CBS 708.71 / DSM 1257 / FGSC 987</strain>
    </source>
</reference>
<accession>Q9P5Z8</accession>
<accession>Q7RUZ2</accession>
<protein>
    <recommendedName>
        <fullName>Probable small nuclear ribonucleoprotein F</fullName>
        <shortName>snRNP-F</shortName>
    </recommendedName>
    <alternativeName>
        <fullName>Sm protein F</fullName>
        <shortName>Sm-F</shortName>
        <shortName>SmF</shortName>
    </alternativeName>
</protein>
<keyword id="KW-0963">Cytoplasm</keyword>
<keyword id="KW-0507">mRNA processing</keyword>
<keyword id="KW-0508">mRNA splicing</keyword>
<keyword id="KW-0539">Nucleus</keyword>
<keyword id="KW-1185">Reference proteome</keyword>
<keyword id="KW-0687">Ribonucleoprotein</keyword>
<keyword id="KW-0694">RNA-binding</keyword>
<keyword id="KW-0747">Spliceosome</keyword>
<dbReference type="EMBL" id="AL355930">
    <property type="protein sequence ID" value="CAB91372.1"/>
    <property type="molecule type" value="Genomic_DNA"/>
</dbReference>
<dbReference type="EMBL" id="CM002237">
    <property type="protein sequence ID" value="EAA27289.1"/>
    <property type="molecule type" value="Genomic_DNA"/>
</dbReference>
<dbReference type="PIR" id="T49571">
    <property type="entry name" value="T49571"/>
</dbReference>
<dbReference type="RefSeq" id="XP_956525.1">
    <property type="nucleotide sequence ID" value="XM_951432.3"/>
</dbReference>
<dbReference type="SMR" id="Q9P5Z8"/>
<dbReference type="FunCoup" id="Q9P5Z8">
    <property type="interactions" value="688"/>
</dbReference>
<dbReference type="STRING" id="367110.Q9P5Z8"/>
<dbReference type="PaxDb" id="5141-EFNCRP00000001835"/>
<dbReference type="EnsemblFungi" id="EAA27289">
    <property type="protein sequence ID" value="EAA27289"/>
    <property type="gene ID" value="NCU01614"/>
</dbReference>
<dbReference type="GeneID" id="3872673"/>
<dbReference type="KEGG" id="ncr:NCU01614"/>
<dbReference type="VEuPathDB" id="FungiDB:NCU01614"/>
<dbReference type="HOGENOM" id="CLU_076902_12_1_1"/>
<dbReference type="InParanoid" id="Q9P5Z8"/>
<dbReference type="OrthoDB" id="409625at2759"/>
<dbReference type="Proteomes" id="UP000001805">
    <property type="component" value="Chromosome 6, Linkage Group II"/>
</dbReference>
<dbReference type="GO" id="GO:0071013">
    <property type="term" value="C:catalytic step 2 spliceosome"/>
    <property type="evidence" value="ECO:0000318"/>
    <property type="project" value="GO_Central"/>
</dbReference>
<dbReference type="GO" id="GO:0034715">
    <property type="term" value="C:pICln-Sm protein complex"/>
    <property type="evidence" value="ECO:0000318"/>
    <property type="project" value="GO_Central"/>
</dbReference>
<dbReference type="GO" id="GO:0071014">
    <property type="term" value="C:post-mRNA release spliceosomal complex"/>
    <property type="evidence" value="ECO:0007669"/>
    <property type="project" value="EnsemblFungi"/>
</dbReference>
<dbReference type="GO" id="GO:0000974">
    <property type="term" value="C:Prp19 complex"/>
    <property type="evidence" value="ECO:0007669"/>
    <property type="project" value="EnsemblFungi"/>
</dbReference>
<dbReference type="GO" id="GO:0005685">
    <property type="term" value="C:U1 snRNP"/>
    <property type="evidence" value="ECO:0000318"/>
    <property type="project" value="GO_Central"/>
</dbReference>
<dbReference type="GO" id="GO:0005686">
    <property type="term" value="C:U2 snRNP"/>
    <property type="evidence" value="ECO:0007669"/>
    <property type="project" value="EnsemblFungi"/>
</dbReference>
<dbReference type="GO" id="GO:0005687">
    <property type="term" value="C:U4 snRNP"/>
    <property type="evidence" value="ECO:0007669"/>
    <property type="project" value="EnsemblFungi"/>
</dbReference>
<dbReference type="GO" id="GO:0046540">
    <property type="term" value="C:U4/U6 x U5 tri-snRNP complex"/>
    <property type="evidence" value="ECO:0007669"/>
    <property type="project" value="EnsemblFungi"/>
</dbReference>
<dbReference type="GO" id="GO:0005682">
    <property type="term" value="C:U5 snRNP"/>
    <property type="evidence" value="ECO:0007669"/>
    <property type="project" value="EnsemblFungi"/>
</dbReference>
<dbReference type="GO" id="GO:0008266">
    <property type="term" value="F:poly(U) RNA binding"/>
    <property type="evidence" value="ECO:0007669"/>
    <property type="project" value="EnsemblFungi"/>
</dbReference>
<dbReference type="GO" id="GO:0003723">
    <property type="term" value="F:RNA binding"/>
    <property type="evidence" value="ECO:0000318"/>
    <property type="project" value="GO_Central"/>
</dbReference>
<dbReference type="GO" id="GO:1990935">
    <property type="term" value="F:splicing factor binding"/>
    <property type="evidence" value="ECO:0007669"/>
    <property type="project" value="EnsemblFungi"/>
</dbReference>
<dbReference type="GO" id="GO:0036261">
    <property type="term" value="P:7-methylguanosine cap hypermethylation"/>
    <property type="evidence" value="ECO:0007669"/>
    <property type="project" value="EnsemblFungi"/>
</dbReference>
<dbReference type="GO" id="GO:0000398">
    <property type="term" value="P:mRNA splicing, via spliceosome"/>
    <property type="evidence" value="ECO:0000318"/>
    <property type="project" value="GO_Central"/>
</dbReference>
<dbReference type="CDD" id="cd01722">
    <property type="entry name" value="Sm_F"/>
    <property type="match status" value="1"/>
</dbReference>
<dbReference type="FunFam" id="2.30.30.100:FF:000118">
    <property type="entry name" value="Probable small nuclear ribonucleoprotein F"/>
    <property type="match status" value="1"/>
</dbReference>
<dbReference type="Gene3D" id="2.30.30.100">
    <property type="match status" value="1"/>
</dbReference>
<dbReference type="InterPro" id="IPR016487">
    <property type="entry name" value="Lsm6/sSmF"/>
</dbReference>
<dbReference type="InterPro" id="IPR010920">
    <property type="entry name" value="LSM_dom_sf"/>
</dbReference>
<dbReference type="InterPro" id="IPR047575">
    <property type="entry name" value="Sm"/>
</dbReference>
<dbReference type="InterPro" id="IPR001163">
    <property type="entry name" value="Sm_dom_euk/arc"/>
</dbReference>
<dbReference type="InterPro" id="IPR034100">
    <property type="entry name" value="Sm_F"/>
</dbReference>
<dbReference type="PANTHER" id="PTHR11021:SF0">
    <property type="entry name" value="SMALL NUCLEAR RIBONUCLEOPROTEIN F"/>
    <property type="match status" value="1"/>
</dbReference>
<dbReference type="PANTHER" id="PTHR11021">
    <property type="entry name" value="SMALL NUCLEAR RIBONUCLEOPROTEIN F SNRNP-F"/>
    <property type="match status" value="1"/>
</dbReference>
<dbReference type="Pfam" id="PF01423">
    <property type="entry name" value="LSM"/>
    <property type="match status" value="1"/>
</dbReference>
<dbReference type="PIRSF" id="PIRSF006609">
    <property type="entry name" value="snRNP_SmF"/>
    <property type="match status" value="1"/>
</dbReference>
<dbReference type="SMART" id="SM00651">
    <property type="entry name" value="Sm"/>
    <property type="match status" value="1"/>
</dbReference>
<dbReference type="SUPFAM" id="SSF50182">
    <property type="entry name" value="Sm-like ribonucleoproteins"/>
    <property type="match status" value="1"/>
</dbReference>
<dbReference type="PROSITE" id="PS52002">
    <property type="entry name" value="SM"/>
    <property type="match status" value="1"/>
</dbReference>
<gene>
    <name type="ORF">B2O8.190</name>
    <name type="ORF">NCU01614</name>
</gene>
<name>RUXF_NEUCR</name>
<organism>
    <name type="scientific">Neurospora crassa (strain ATCC 24698 / 74-OR23-1A / CBS 708.71 / DSM 1257 / FGSC 987)</name>
    <dbReference type="NCBI Taxonomy" id="367110"/>
    <lineage>
        <taxon>Eukaryota</taxon>
        <taxon>Fungi</taxon>
        <taxon>Dikarya</taxon>
        <taxon>Ascomycota</taxon>
        <taxon>Pezizomycotina</taxon>
        <taxon>Sordariomycetes</taxon>
        <taxon>Sordariomycetidae</taxon>
        <taxon>Sordariales</taxon>
        <taxon>Sordariaceae</taxon>
        <taxon>Neurospora</taxon>
    </lineage>
</organism>
<feature type="chain" id="PRO_0000125542" description="Probable small nuclear ribonucleoprotein F">
    <location>
        <begin position="1"/>
        <end position="90"/>
    </location>
</feature>
<feature type="domain" description="Sm" evidence="3">
    <location>
        <begin position="7"/>
        <end position="80"/>
    </location>
</feature>
<sequence length="90" mass="10335">MSFVPVNPRPFLQDLVNSFVTIRLKWGETEYVGRLVSIDSYMNIQLSDTKEYINRKFTGALGQVLIRCNNVLYIKKADEAETSGDVKMEE</sequence>
<proteinExistence type="inferred from homology"/>
<evidence type="ECO:0000250" key="1">
    <source>
        <dbReference type="UniProtKB" id="O59734"/>
    </source>
</evidence>
<evidence type="ECO:0000250" key="2">
    <source>
        <dbReference type="UniProtKB" id="P62306"/>
    </source>
</evidence>
<evidence type="ECO:0000255" key="3">
    <source>
        <dbReference type="PROSITE-ProRule" id="PRU01346"/>
    </source>
</evidence>
<evidence type="ECO:0000305" key="4"/>
<comment type="function">
    <text evidence="2">Plays a role in pre-mRNA splicing as a core component of the spliceosomal U1, U2, U4 and U5 small nuclear ribonucleoproteins (snRNPs), the building blocks of the spliceosome (By similarity).</text>
</comment>
<comment type="subcellular location">
    <subcellularLocation>
        <location evidence="1">Nucleus</location>
    </subcellularLocation>
    <subcellularLocation>
        <location evidence="1">Cytoplasm</location>
    </subcellularLocation>
</comment>
<comment type="similarity">
    <text evidence="4">Belongs to the snRNP Sm proteins family. SmF/LSm6 subfamily.</text>
</comment>